<sequence>MAAKDVKFNTEARNKMLKGVNILADAVKVTLGPKGRNVVLDKSFGAPRITKDGVSVAKEIELEDKFENMGAQMVKEVASRTNDEAGDGTTTATVLAQAIVREGMKSVAAGMNPMDLKRGIDLATAKVVEAIKAASRPVNDSAEVAQVGTISANGESEIGRQIAEAMQKVGNEGVITVEENKGLETETDVVEGMQFDRGYLSPYFVTNADKMIAELEDCMILLHEKKLSSLQPMVPLLEQVIQSQKPLLIIAEDVEGEALATLVVNKLRGGLKIAAVKAPGFGDRRKAMLQDIAILTGGQVISEDLGMKLESVTMDMLGTAKKISITKDETTIVDGAGEKAEIEARVAQIRTQIEETTSDYDREKLQERVAKLAGGVAVIRVGGMTEVEVKERKDRVDDALNATRAAVQEGVVVGGGVALVQAGKVLADLEGANADQTAGINIVRKAIEAPLRQIAENAGVDGAVVAGKVRESGDASFGFNAQTEEYGDMFKFGVIDPAKVVRTALEDASSVAGLLITTEAMVADKPQKDAPAGGGMPDMGGMGGMM</sequence>
<dbReference type="EC" id="5.6.1.7" evidence="1"/>
<dbReference type="EMBL" id="CP000031">
    <property type="protein sequence ID" value="AAV94192.1"/>
    <property type="molecule type" value="Genomic_DNA"/>
</dbReference>
<dbReference type="RefSeq" id="WP_011046636.1">
    <property type="nucleotide sequence ID" value="NC_003911.12"/>
</dbReference>
<dbReference type="SMR" id="Q5LV15"/>
<dbReference type="STRING" id="246200.SPO0887"/>
<dbReference type="PaxDb" id="246200-SPO0887"/>
<dbReference type="KEGG" id="sil:SPO0887"/>
<dbReference type="eggNOG" id="COG0459">
    <property type="taxonomic scope" value="Bacteria"/>
</dbReference>
<dbReference type="HOGENOM" id="CLU_016503_3_0_5"/>
<dbReference type="OrthoDB" id="9766614at2"/>
<dbReference type="Proteomes" id="UP000001023">
    <property type="component" value="Chromosome"/>
</dbReference>
<dbReference type="GO" id="GO:0005737">
    <property type="term" value="C:cytoplasm"/>
    <property type="evidence" value="ECO:0007669"/>
    <property type="project" value="UniProtKB-SubCell"/>
</dbReference>
<dbReference type="GO" id="GO:0005524">
    <property type="term" value="F:ATP binding"/>
    <property type="evidence" value="ECO:0007669"/>
    <property type="project" value="UniProtKB-UniRule"/>
</dbReference>
<dbReference type="GO" id="GO:0140662">
    <property type="term" value="F:ATP-dependent protein folding chaperone"/>
    <property type="evidence" value="ECO:0007669"/>
    <property type="project" value="InterPro"/>
</dbReference>
<dbReference type="GO" id="GO:0016853">
    <property type="term" value="F:isomerase activity"/>
    <property type="evidence" value="ECO:0007669"/>
    <property type="project" value="UniProtKB-KW"/>
</dbReference>
<dbReference type="GO" id="GO:0051082">
    <property type="term" value="F:unfolded protein binding"/>
    <property type="evidence" value="ECO:0007669"/>
    <property type="project" value="UniProtKB-UniRule"/>
</dbReference>
<dbReference type="GO" id="GO:0042026">
    <property type="term" value="P:protein refolding"/>
    <property type="evidence" value="ECO:0007669"/>
    <property type="project" value="UniProtKB-UniRule"/>
</dbReference>
<dbReference type="CDD" id="cd03344">
    <property type="entry name" value="GroEL"/>
    <property type="match status" value="1"/>
</dbReference>
<dbReference type="FunFam" id="1.10.560.10:FF:000001">
    <property type="entry name" value="60 kDa chaperonin"/>
    <property type="match status" value="1"/>
</dbReference>
<dbReference type="FunFam" id="3.50.7.10:FF:000001">
    <property type="entry name" value="60 kDa chaperonin"/>
    <property type="match status" value="1"/>
</dbReference>
<dbReference type="Gene3D" id="3.50.7.10">
    <property type="entry name" value="GroEL"/>
    <property type="match status" value="1"/>
</dbReference>
<dbReference type="Gene3D" id="1.10.560.10">
    <property type="entry name" value="GroEL-like equatorial domain"/>
    <property type="match status" value="1"/>
</dbReference>
<dbReference type="Gene3D" id="3.30.260.10">
    <property type="entry name" value="TCP-1-like chaperonin intermediate domain"/>
    <property type="match status" value="1"/>
</dbReference>
<dbReference type="HAMAP" id="MF_00600">
    <property type="entry name" value="CH60"/>
    <property type="match status" value="1"/>
</dbReference>
<dbReference type="InterPro" id="IPR018370">
    <property type="entry name" value="Chaperonin_Cpn60_CS"/>
</dbReference>
<dbReference type="InterPro" id="IPR001844">
    <property type="entry name" value="Cpn60/GroEL"/>
</dbReference>
<dbReference type="InterPro" id="IPR002423">
    <property type="entry name" value="Cpn60/GroEL/TCP-1"/>
</dbReference>
<dbReference type="InterPro" id="IPR027409">
    <property type="entry name" value="GroEL-like_apical_dom_sf"/>
</dbReference>
<dbReference type="InterPro" id="IPR027413">
    <property type="entry name" value="GROEL-like_equatorial_sf"/>
</dbReference>
<dbReference type="InterPro" id="IPR027410">
    <property type="entry name" value="TCP-1-like_intermed_sf"/>
</dbReference>
<dbReference type="NCBIfam" id="TIGR02348">
    <property type="entry name" value="GroEL"/>
    <property type="match status" value="1"/>
</dbReference>
<dbReference type="NCBIfam" id="NF000592">
    <property type="entry name" value="PRK00013.1"/>
    <property type="match status" value="1"/>
</dbReference>
<dbReference type="NCBIfam" id="NF009487">
    <property type="entry name" value="PRK12849.1"/>
    <property type="match status" value="1"/>
</dbReference>
<dbReference type="NCBIfam" id="NF009488">
    <property type="entry name" value="PRK12850.1"/>
    <property type="match status" value="1"/>
</dbReference>
<dbReference type="NCBIfam" id="NF009489">
    <property type="entry name" value="PRK12851.1"/>
    <property type="match status" value="1"/>
</dbReference>
<dbReference type="PANTHER" id="PTHR45633">
    <property type="entry name" value="60 KDA HEAT SHOCK PROTEIN, MITOCHONDRIAL"/>
    <property type="match status" value="1"/>
</dbReference>
<dbReference type="Pfam" id="PF00118">
    <property type="entry name" value="Cpn60_TCP1"/>
    <property type="match status" value="1"/>
</dbReference>
<dbReference type="PRINTS" id="PR00298">
    <property type="entry name" value="CHAPERONIN60"/>
</dbReference>
<dbReference type="SUPFAM" id="SSF52029">
    <property type="entry name" value="GroEL apical domain-like"/>
    <property type="match status" value="1"/>
</dbReference>
<dbReference type="SUPFAM" id="SSF48592">
    <property type="entry name" value="GroEL equatorial domain-like"/>
    <property type="match status" value="1"/>
</dbReference>
<dbReference type="SUPFAM" id="SSF54849">
    <property type="entry name" value="GroEL-intermediate domain like"/>
    <property type="match status" value="1"/>
</dbReference>
<dbReference type="PROSITE" id="PS00296">
    <property type="entry name" value="CHAPERONINS_CPN60"/>
    <property type="match status" value="1"/>
</dbReference>
<organism>
    <name type="scientific">Ruegeria pomeroyi (strain ATCC 700808 / DSM 15171 / DSS-3)</name>
    <name type="common">Silicibacter pomeroyi</name>
    <dbReference type="NCBI Taxonomy" id="246200"/>
    <lineage>
        <taxon>Bacteria</taxon>
        <taxon>Pseudomonadati</taxon>
        <taxon>Pseudomonadota</taxon>
        <taxon>Alphaproteobacteria</taxon>
        <taxon>Rhodobacterales</taxon>
        <taxon>Roseobacteraceae</taxon>
        <taxon>Ruegeria</taxon>
    </lineage>
</organism>
<protein>
    <recommendedName>
        <fullName evidence="1">Chaperonin GroEL</fullName>
        <ecNumber evidence="1">5.6.1.7</ecNumber>
    </recommendedName>
    <alternativeName>
        <fullName evidence="1">60 kDa chaperonin</fullName>
    </alternativeName>
    <alternativeName>
        <fullName evidence="1">Chaperonin-60</fullName>
        <shortName evidence="1">Cpn60</shortName>
    </alternativeName>
</protein>
<accession>Q5LV15</accession>
<gene>
    <name evidence="1" type="primary">groEL</name>
    <name evidence="1" type="synonym">groL</name>
    <name type="ordered locus">SPO0887</name>
</gene>
<feature type="chain" id="PRO_0000063529" description="Chaperonin GroEL">
    <location>
        <begin position="1"/>
        <end position="546"/>
    </location>
</feature>
<feature type="region of interest" description="Disordered" evidence="2">
    <location>
        <begin position="526"/>
        <end position="546"/>
    </location>
</feature>
<feature type="compositionally biased region" description="Gly residues" evidence="2">
    <location>
        <begin position="532"/>
        <end position="546"/>
    </location>
</feature>
<feature type="binding site" evidence="1">
    <location>
        <begin position="30"/>
        <end position="33"/>
    </location>
    <ligand>
        <name>ATP</name>
        <dbReference type="ChEBI" id="CHEBI:30616"/>
    </ligand>
</feature>
<feature type="binding site" evidence="1">
    <location>
        <position position="51"/>
    </location>
    <ligand>
        <name>ATP</name>
        <dbReference type="ChEBI" id="CHEBI:30616"/>
    </ligand>
</feature>
<feature type="binding site" evidence="1">
    <location>
        <begin position="87"/>
        <end position="91"/>
    </location>
    <ligand>
        <name>ATP</name>
        <dbReference type="ChEBI" id="CHEBI:30616"/>
    </ligand>
</feature>
<feature type="binding site" evidence="1">
    <location>
        <position position="415"/>
    </location>
    <ligand>
        <name>ATP</name>
        <dbReference type="ChEBI" id="CHEBI:30616"/>
    </ligand>
</feature>
<feature type="binding site" evidence="1">
    <location>
        <position position="496"/>
    </location>
    <ligand>
        <name>ATP</name>
        <dbReference type="ChEBI" id="CHEBI:30616"/>
    </ligand>
</feature>
<keyword id="KW-0067">ATP-binding</keyword>
<keyword id="KW-0143">Chaperone</keyword>
<keyword id="KW-0963">Cytoplasm</keyword>
<keyword id="KW-0413">Isomerase</keyword>
<keyword id="KW-0547">Nucleotide-binding</keyword>
<keyword id="KW-1185">Reference proteome</keyword>
<reference key="1">
    <citation type="journal article" date="2004" name="Nature">
        <title>Genome sequence of Silicibacter pomeroyi reveals adaptations to the marine environment.</title>
        <authorList>
            <person name="Moran M.A."/>
            <person name="Buchan A."/>
            <person name="Gonzalez J.M."/>
            <person name="Heidelberg J.F."/>
            <person name="Whitman W.B."/>
            <person name="Kiene R.P."/>
            <person name="Henriksen J.R."/>
            <person name="King G.M."/>
            <person name="Belas R."/>
            <person name="Fuqua C."/>
            <person name="Brinkac L.M."/>
            <person name="Lewis M."/>
            <person name="Johri S."/>
            <person name="Weaver B."/>
            <person name="Pai G."/>
            <person name="Eisen J.A."/>
            <person name="Rahe E."/>
            <person name="Sheldon W.M."/>
            <person name="Ye W."/>
            <person name="Miller T.R."/>
            <person name="Carlton J."/>
            <person name="Rasko D.A."/>
            <person name="Paulsen I.T."/>
            <person name="Ren Q."/>
            <person name="Daugherty S.C."/>
            <person name="DeBoy R.T."/>
            <person name="Dodson R.J."/>
            <person name="Durkin A.S."/>
            <person name="Madupu R."/>
            <person name="Nelson W.C."/>
            <person name="Sullivan S.A."/>
            <person name="Rosovitz M.J."/>
            <person name="Haft D.H."/>
            <person name="Selengut J."/>
            <person name="Ward N."/>
        </authorList>
    </citation>
    <scope>NUCLEOTIDE SEQUENCE [LARGE SCALE GENOMIC DNA]</scope>
    <source>
        <strain>ATCC 700808 / DSM 15171 / DSS-3</strain>
    </source>
</reference>
<reference key="2">
    <citation type="journal article" date="2014" name="Stand. Genomic Sci.">
        <title>An updated genome annotation for the model marine bacterium Ruegeria pomeroyi DSS-3.</title>
        <authorList>
            <person name="Rivers A.R."/>
            <person name="Smith C.B."/>
            <person name="Moran M.A."/>
        </authorList>
    </citation>
    <scope>GENOME REANNOTATION</scope>
    <source>
        <strain>ATCC 700808 / DSM 15171 / DSS-3</strain>
    </source>
</reference>
<evidence type="ECO:0000255" key="1">
    <source>
        <dbReference type="HAMAP-Rule" id="MF_00600"/>
    </source>
</evidence>
<evidence type="ECO:0000256" key="2">
    <source>
        <dbReference type="SAM" id="MobiDB-lite"/>
    </source>
</evidence>
<name>CH60_RUEPO</name>
<proteinExistence type="inferred from homology"/>
<comment type="function">
    <text evidence="1">Together with its co-chaperonin GroES, plays an essential role in assisting protein folding. The GroEL-GroES system forms a nano-cage that allows encapsulation of the non-native substrate proteins and provides a physical environment optimized to promote and accelerate protein folding.</text>
</comment>
<comment type="catalytic activity">
    <reaction evidence="1">
        <text>ATP + H2O + a folded polypeptide = ADP + phosphate + an unfolded polypeptide.</text>
        <dbReference type="EC" id="5.6.1.7"/>
    </reaction>
</comment>
<comment type="subunit">
    <text evidence="1">Forms a cylinder of 14 subunits composed of two heptameric rings stacked back-to-back. Interacts with the co-chaperonin GroES.</text>
</comment>
<comment type="subcellular location">
    <subcellularLocation>
        <location evidence="1">Cytoplasm</location>
    </subcellularLocation>
</comment>
<comment type="similarity">
    <text evidence="1">Belongs to the chaperonin (HSP60) family.</text>
</comment>